<name>IMP18_NAUMA</name>
<keyword id="KW-0903">Direct protein sequencing</keyword>
<proteinExistence type="evidence at protein level"/>
<accession>P85400</accession>
<feature type="chain" id="PRO_0000371479" description="Uncharacterized protein IMPP18">
    <location>
        <begin position="1" status="less than"/>
        <end position="17" status="greater than"/>
    </location>
</feature>
<feature type="unsure residue" description="L or I" evidence="1">
    <location>
        <position position="3"/>
    </location>
</feature>
<feature type="non-terminal residue" evidence="2">
    <location>
        <position position="1"/>
    </location>
</feature>
<feature type="non-terminal residue" evidence="2">
    <location>
        <position position="17"/>
    </location>
</feature>
<reference key="1">
    <citation type="journal article" date="2009" name="ChemBioChem">
        <title>Evolution of nacre: biochemistry and 'shellomics' of the shell organic matrix of the cephalopod Nautilus macromphalus.</title>
        <authorList>
            <person name="Marie B."/>
            <person name="Marin F."/>
            <person name="Marie A."/>
            <person name="Bedouet L."/>
            <person name="Dubost L."/>
            <person name="Alcaraz G."/>
            <person name="Milet C."/>
            <person name="Luquet G."/>
        </authorList>
    </citation>
    <scope>PROTEIN SEQUENCE</scope>
    <scope>TISSUE SPECIFICITY</scope>
    <source>
        <tissue>Shell</tissue>
    </source>
</reference>
<sequence>MFLGPGGAGGQAFDQAR</sequence>
<evidence type="ECO:0000269" key="1">
    <source>
    </source>
</evidence>
<evidence type="ECO:0000303" key="2">
    <source>
    </source>
</evidence>
<organism>
    <name type="scientific">Nautilus macromphalus</name>
    <name type="common">Bellybutton nautilus</name>
    <dbReference type="NCBI Taxonomy" id="34576"/>
    <lineage>
        <taxon>Eukaryota</taxon>
        <taxon>Metazoa</taxon>
        <taxon>Spiralia</taxon>
        <taxon>Lophotrochozoa</taxon>
        <taxon>Mollusca</taxon>
        <taxon>Cephalopoda</taxon>
        <taxon>Nautiloidea</taxon>
        <taxon>Nautilida</taxon>
        <taxon>Nautilidae</taxon>
        <taxon>Nautilus</taxon>
    </lineage>
</organism>
<comment type="tissue specificity">
    <text evidence="1">Nacreous layer of shell.</text>
</comment>
<protein>
    <recommendedName>
        <fullName evidence="2">Uncharacterized protein IMPP18</fullName>
    </recommendedName>
</protein>